<keyword id="KW-1015">Disulfide bond</keyword>
<keyword id="KW-1199">Hemostasis impairing toxin</keyword>
<keyword id="KW-0964">Secreted</keyword>
<keyword id="KW-0732">Signal</keyword>
<keyword id="KW-0800">Toxin</keyword>
<organism>
    <name type="scientific">Echis ocellatus</name>
    <name type="common">Ocellated saw-scaled viper</name>
    <dbReference type="NCBI Taxonomy" id="99586"/>
    <lineage>
        <taxon>Eukaryota</taxon>
        <taxon>Metazoa</taxon>
        <taxon>Chordata</taxon>
        <taxon>Craniata</taxon>
        <taxon>Vertebrata</taxon>
        <taxon>Euteleostomi</taxon>
        <taxon>Lepidosauria</taxon>
        <taxon>Squamata</taxon>
        <taxon>Bifurcata</taxon>
        <taxon>Unidentata</taxon>
        <taxon>Episquamata</taxon>
        <taxon>Toxicofera</taxon>
        <taxon>Serpentes</taxon>
        <taxon>Colubroidea</taxon>
        <taxon>Viperidae</taxon>
        <taxon>Viperinae</taxon>
        <taxon>Echis</taxon>
    </lineage>
</organism>
<feature type="signal peptide" evidence="2">
    <location>
        <begin position="1" status="less than"/>
        <end position="23"/>
    </location>
</feature>
<feature type="chain" id="PRO_0000355273" description="Snaclec 27">
    <location>
        <begin position="24"/>
        <end position="148"/>
    </location>
</feature>
<feature type="domain" description="C-type lectin" evidence="3">
    <location>
        <begin position="34"/>
        <end position="145"/>
    </location>
</feature>
<feature type="disulfide bond" evidence="3">
    <location>
        <begin position="27"/>
        <end position="38"/>
    </location>
</feature>
<feature type="disulfide bond" evidence="3">
    <location>
        <begin position="55"/>
        <end position="144"/>
    </location>
</feature>
<feature type="disulfide bond" description="Interchain" evidence="3">
    <location>
        <position position="100"/>
    </location>
</feature>
<feature type="disulfide bond" evidence="3">
    <location>
        <begin position="121"/>
        <end position="136"/>
    </location>
</feature>
<feature type="non-terminal residue">
    <location>
        <position position="1"/>
    </location>
</feature>
<sequence length="148" mass="16976">WGDSSSSASACWSCFSLVSGIGADQECPPGWSSHEGHCYKVFSEYKTWVDAEQYCTEQENGGHLVSFHNREEVDFVVKLGYTILKADIVWIGLRDFWRECHWEWSNGAQLDYKGWSDEPNCFIVYTVGNKWLHRKCSSTQQFVCKSPA</sequence>
<comment type="function">
    <text evidence="1">Interferes with one step of hemostasis (modulation of platelet aggregation, or coagulation cascade, for example).</text>
</comment>
<comment type="subunit">
    <text evidence="1">Heterodimer; disulfide-linked.</text>
</comment>
<comment type="subcellular location">
    <subcellularLocation>
        <location evidence="1">Secreted</location>
    </subcellularLocation>
</comment>
<comment type="tissue specificity">
    <text>Expressed by the venom gland.</text>
</comment>
<comment type="miscellaneous">
    <text>Shows greater sequence similarity to the beta than alpha subunits compared to other heterodimer snaclecs.</text>
</comment>
<comment type="similarity">
    <text evidence="4">Belongs to the snaclec family.</text>
</comment>
<reference key="1">
    <citation type="journal article" date="2003" name="Gene">
        <title>Novel sequences encoding venom C-type lectins are conserved in phylogenetically and geographically distinct Echis and Bitis viper species.</title>
        <authorList>
            <person name="Harrison R.A."/>
            <person name="Oliver J."/>
            <person name="Hasson S.S."/>
            <person name="Bharati K."/>
            <person name="Theakston R.D.G."/>
        </authorList>
    </citation>
    <scope>NUCLEOTIDE SEQUENCE [MRNA]</scope>
    <source>
        <tissue>Venom gland</tissue>
    </source>
</reference>
<proteinExistence type="evidence at transcript level"/>
<dbReference type="EMBL" id="AY254335">
    <property type="protein sequence ID" value="AAQ01216.1"/>
    <property type="molecule type" value="mRNA"/>
</dbReference>
<dbReference type="SMR" id="Q6X5S5"/>
<dbReference type="GO" id="GO:0005576">
    <property type="term" value="C:extracellular region"/>
    <property type="evidence" value="ECO:0007669"/>
    <property type="project" value="UniProtKB-SubCell"/>
</dbReference>
<dbReference type="GO" id="GO:0090729">
    <property type="term" value="F:toxin activity"/>
    <property type="evidence" value="ECO:0007669"/>
    <property type="project" value="UniProtKB-KW"/>
</dbReference>
<dbReference type="FunFam" id="3.10.100.10:FF:000087">
    <property type="entry name" value="Snaclec rhodocetin subunit delta"/>
    <property type="match status" value="1"/>
</dbReference>
<dbReference type="Gene3D" id="3.10.100.10">
    <property type="entry name" value="Mannose-Binding Protein A, subunit A"/>
    <property type="match status" value="1"/>
</dbReference>
<dbReference type="InterPro" id="IPR001304">
    <property type="entry name" value="C-type_lectin-like"/>
</dbReference>
<dbReference type="InterPro" id="IPR016186">
    <property type="entry name" value="C-type_lectin-like/link_sf"/>
</dbReference>
<dbReference type="InterPro" id="IPR050111">
    <property type="entry name" value="C-type_lectin/snaclec_domain"/>
</dbReference>
<dbReference type="InterPro" id="IPR016187">
    <property type="entry name" value="CTDL_fold"/>
</dbReference>
<dbReference type="PANTHER" id="PTHR22803">
    <property type="entry name" value="MANNOSE, PHOSPHOLIPASE, LECTIN RECEPTOR RELATED"/>
    <property type="match status" value="1"/>
</dbReference>
<dbReference type="Pfam" id="PF00059">
    <property type="entry name" value="Lectin_C"/>
    <property type="match status" value="1"/>
</dbReference>
<dbReference type="PRINTS" id="PR01504">
    <property type="entry name" value="PNCREATITSAP"/>
</dbReference>
<dbReference type="SMART" id="SM00034">
    <property type="entry name" value="CLECT"/>
    <property type="match status" value="1"/>
</dbReference>
<dbReference type="SUPFAM" id="SSF56436">
    <property type="entry name" value="C-type lectin-like"/>
    <property type="match status" value="1"/>
</dbReference>
<dbReference type="PROSITE" id="PS50041">
    <property type="entry name" value="C_TYPE_LECTIN_2"/>
    <property type="match status" value="1"/>
</dbReference>
<name>SL27_ECHOC</name>
<accession>Q6X5S5</accession>
<evidence type="ECO:0000250" key="1"/>
<evidence type="ECO:0000255" key="2"/>
<evidence type="ECO:0000255" key="3">
    <source>
        <dbReference type="PROSITE-ProRule" id="PRU00040"/>
    </source>
</evidence>
<evidence type="ECO:0000305" key="4"/>
<protein>
    <recommendedName>
        <fullName>Snaclec 27</fullName>
    </recommendedName>
    <alternativeName>
        <fullName>C-type lectin 27</fullName>
        <shortName>CTL-27</shortName>
    </alternativeName>
</protein>